<keyword id="KW-0028">Amino-acid biosynthesis</keyword>
<keyword id="KW-0057">Aromatic amino acid biosynthesis</keyword>
<keyword id="KW-0413">Isomerase</keyword>
<keyword id="KW-0822">Tryptophan biosynthesis</keyword>
<sequence length="211" mass="22447">MLIKVCGLTRQADVDLAASFGASMCGFIFHPVSPRCVSPVQAASLESGSMLRVGVFVEQDAEEICRIMAEARLDMAQLHGRQDAACARAVGAQRVIRVIWPARYCHRALLYNELQNHADACACYLLDAGLAGGGSGVRLDWEDLNHLPSPRPWLLAGGLSAENVGLALSRCSPDGVDFNSGVEDAPGQKNAQKLAAALAVAAKQKGNRYLS</sequence>
<organism>
    <name type="scientific">Desulfovibrio desulfuricans (strain ATCC 27774 / DSM 6949 / MB)</name>
    <dbReference type="NCBI Taxonomy" id="525146"/>
    <lineage>
        <taxon>Bacteria</taxon>
        <taxon>Pseudomonadati</taxon>
        <taxon>Thermodesulfobacteriota</taxon>
        <taxon>Desulfovibrionia</taxon>
        <taxon>Desulfovibrionales</taxon>
        <taxon>Desulfovibrionaceae</taxon>
        <taxon>Desulfovibrio</taxon>
    </lineage>
</organism>
<comment type="catalytic activity">
    <reaction evidence="1">
        <text>N-(5-phospho-beta-D-ribosyl)anthranilate = 1-(2-carboxyphenylamino)-1-deoxy-D-ribulose 5-phosphate</text>
        <dbReference type="Rhea" id="RHEA:21540"/>
        <dbReference type="ChEBI" id="CHEBI:18277"/>
        <dbReference type="ChEBI" id="CHEBI:58613"/>
        <dbReference type="EC" id="5.3.1.24"/>
    </reaction>
</comment>
<comment type="pathway">
    <text evidence="1">Amino-acid biosynthesis; L-tryptophan biosynthesis; L-tryptophan from chorismate: step 3/5.</text>
</comment>
<comment type="similarity">
    <text evidence="1">Belongs to the TrpF family.</text>
</comment>
<gene>
    <name evidence="1" type="primary">trpF</name>
    <name type="ordered locus">Ddes_1589</name>
</gene>
<name>TRPF_DESDA</name>
<accession>B8J162</accession>
<reference key="1">
    <citation type="submission" date="2009-01" db="EMBL/GenBank/DDBJ databases">
        <title>Complete sequence of Desulfovibrio desulfuricans subsp. desulfuricans str. ATCC 27774.</title>
        <authorList>
            <consortium name="US DOE Joint Genome Institute"/>
            <person name="Lucas S."/>
            <person name="Copeland A."/>
            <person name="Lapidus A."/>
            <person name="Glavina del Rio T."/>
            <person name="Tice H."/>
            <person name="Bruce D."/>
            <person name="Goodwin L."/>
            <person name="Pitluck S."/>
            <person name="Sims D."/>
            <person name="Lu M."/>
            <person name="Kiss H."/>
            <person name="Meineke L."/>
            <person name="Brettin T."/>
            <person name="Detter J.C."/>
            <person name="Han C."/>
            <person name="Larimer F."/>
            <person name="Land M."/>
            <person name="Hauser L."/>
            <person name="Kyrpides N."/>
            <person name="Ovchinnikova G."/>
            <person name="Hazen T.C."/>
        </authorList>
    </citation>
    <scope>NUCLEOTIDE SEQUENCE [LARGE SCALE GENOMIC DNA]</scope>
    <source>
        <strain>ATCC 27774 / DSM 6949 / MB</strain>
    </source>
</reference>
<proteinExistence type="inferred from homology"/>
<feature type="chain" id="PRO_1000197101" description="N-(5'-phosphoribosyl)anthranilate isomerase">
    <location>
        <begin position="1"/>
        <end position="211"/>
    </location>
</feature>
<evidence type="ECO:0000255" key="1">
    <source>
        <dbReference type="HAMAP-Rule" id="MF_00135"/>
    </source>
</evidence>
<protein>
    <recommendedName>
        <fullName evidence="1">N-(5'-phosphoribosyl)anthranilate isomerase</fullName>
        <shortName evidence="1">PRAI</shortName>
        <ecNumber evidence="1">5.3.1.24</ecNumber>
    </recommendedName>
</protein>
<dbReference type="EC" id="5.3.1.24" evidence="1"/>
<dbReference type="EMBL" id="CP001358">
    <property type="protein sequence ID" value="ACL49489.1"/>
    <property type="molecule type" value="Genomic_DNA"/>
</dbReference>
<dbReference type="SMR" id="B8J162"/>
<dbReference type="STRING" id="525146.Ddes_1589"/>
<dbReference type="KEGG" id="dds:Ddes_1589"/>
<dbReference type="eggNOG" id="COG0135">
    <property type="taxonomic scope" value="Bacteria"/>
</dbReference>
<dbReference type="HOGENOM" id="CLU_076364_2_0_7"/>
<dbReference type="UniPathway" id="UPA00035">
    <property type="reaction ID" value="UER00042"/>
</dbReference>
<dbReference type="GO" id="GO:0004640">
    <property type="term" value="F:phosphoribosylanthranilate isomerase activity"/>
    <property type="evidence" value="ECO:0007669"/>
    <property type="project" value="UniProtKB-UniRule"/>
</dbReference>
<dbReference type="GO" id="GO:0000162">
    <property type="term" value="P:L-tryptophan biosynthetic process"/>
    <property type="evidence" value="ECO:0007669"/>
    <property type="project" value="UniProtKB-UniRule"/>
</dbReference>
<dbReference type="CDD" id="cd00405">
    <property type="entry name" value="PRAI"/>
    <property type="match status" value="1"/>
</dbReference>
<dbReference type="Gene3D" id="3.20.20.70">
    <property type="entry name" value="Aldolase class I"/>
    <property type="match status" value="1"/>
</dbReference>
<dbReference type="HAMAP" id="MF_00135">
    <property type="entry name" value="PRAI"/>
    <property type="match status" value="1"/>
</dbReference>
<dbReference type="InterPro" id="IPR013785">
    <property type="entry name" value="Aldolase_TIM"/>
</dbReference>
<dbReference type="InterPro" id="IPR001240">
    <property type="entry name" value="PRAI_dom"/>
</dbReference>
<dbReference type="InterPro" id="IPR011060">
    <property type="entry name" value="RibuloseP-bd_barrel"/>
</dbReference>
<dbReference type="InterPro" id="IPR044643">
    <property type="entry name" value="TrpF_fam"/>
</dbReference>
<dbReference type="PANTHER" id="PTHR42894">
    <property type="entry name" value="N-(5'-PHOSPHORIBOSYL)ANTHRANILATE ISOMERASE"/>
    <property type="match status" value="1"/>
</dbReference>
<dbReference type="PANTHER" id="PTHR42894:SF1">
    <property type="entry name" value="N-(5'-PHOSPHORIBOSYL)ANTHRANILATE ISOMERASE"/>
    <property type="match status" value="1"/>
</dbReference>
<dbReference type="Pfam" id="PF00697">
    <property type="entry name" value="PRAI"/>
    <property type="match status" value="1"/>
</dbReference>
<dbReference type="SUPFAM" id="SSF51366">
    <property type="entry name" value="Ribulose-phoshate binding barrel"/>
    <property type="match status" value="1"/>
</dbReference>